<feature type="chain" id="PRO_1000165510" description="Small ribosomal subunit protein uS3">
    <location>
        <begin position="1"/>
        <end position="230"/>
    </location>
</feature>
<feature type="domain" description="KH type-2" evidence="1">
    <location>
        <begin position="39"/>
        <end position="107"/>
    </location>
</feature>
<gene>
    <name evidence="1" type="primary">rpsC</name>
    <name type="ordered locus">Sbal223_4050</name>
</gene>
<accession>B8EBJ9</accession>
<proteinExistence type="inferred from homology"/>
<sequence length="230" mass="25767">MGQKVHPNGIRLGITKPWISTWYADKSDYASNLNSDWEVRKFLVEKLQAASVSKIVIERPAKSIRVTIHTARPGVVIGKKGEDVEVLRAAVSKLAGTPAQINIAEIRKPELDAKLVADSIAQQLERRVMFRRAMKRAVQNAMRIGAQGIKVQVSGRLGGAEIARDEWYREGRVPLHTLRADIDYSTSESHTQYGVIGVKVWIFKGEVLDGMLPQIEEPKQQQPKRKPRGK</sequence>
<evidence type="ECO:0000255" key="1">
    <source>
        <dbReference type="HAMAP-Rule" id="MF_01309"/>
    </source>
</evidence>
<evidence type="ECO:0000305" key="2"/>
<protein>
    <recommendedName>
        <fullName evidence="1">Small ribosomal subunit protein uS3</fullName>
    </recommendedName>
    <alternativeName>
        <fullName evidence="2">30S ribosomal protein S3</fullName>
    </alternativeName>
</protein>
<name>RS3_SHEB2</name>
<reference key="1">
    <citation type="submission" date="2008-12" db="EMBL/GenBank/DDBJ databases">
        <title>Complete sequence of chromosome of Shewanella baltica OS223.</title>
        <authorList>
            <consortium name="US DOE Joint Genome Institute"/>
            <person name="Lucas S."/>
            <person name="Copeland A."/>
            <person name="Lapidus A."/>
            <person name="Glavina del Rio T."/>
            <person name="Dalin E."/>
            <person name="Tice H."/>
            <person name="Bruce D."/>
            <person name="Goodwin L."/>
            <person name="Pitluck S."/>
            <person name="Chertkov O."/>
            <person name="Meincke L."/>
            <person name="Brettin T."/>
            <person name="Detter J.C."/>
            <person name="Han C."/>
            <person name="Kuske C.R."/>
            <person name="Larimer F."/>
            <person name="Land M."/>
            <person name="Hauser L."/>
            <person name="Kyrpides N."/>
            <person name="Ovchinnikova G."/>
            <person name="Brettar I."/>
            <person name="Rodrigues J."/>
            <person name="Konstantinidis K."/>
            <person name="Tiedje J."/>
        </authorList>
    </citation>
    <scope>NUCLEOTIDE SEQUENCE [LARGE SCALE GENOMIC DNA]</scope>
    <source>
        <strain>OS223</strain>
    </source>
</reference>
<dbReference type="EMBL" id="CP001252">
    <property type="protein sequence ID" value="ACK48523.1"/>
    <property type="molecule type" value="Genomic_DNA"/>
</dbReference>
<dbReference type="RefSeq" id="WP_006083594.1">
    <property type="nucleotide sequence ID" value="NC_011663.1"/>
</dbReference>
<dbReference type="SMR" id="B8EBJ9"/>
<dbReference type="GeneID" id="11774508"/>
<dbReference type="KEGG" id="sbp:Sbal223_4050"/>
<dbReference type="HOGENOM" id="CLU_058591_0_2_6"/>
<dbReference type="Proteomes" id="UP000002507">
    <property type="component" value="Chromosome"/>
</dbReference>
<dbReference type="GO" id="GO:0022627">
    <property type="term" value="C:cytosolic small ribosomal subunit"/>
    <property type="evidence" value="ECO:0007669"/>
    <property type="project" value="TreeGrafter"/>
</dbReference>
<dbReference type="GO" id="GO:0003729">
    <property type="term" value="F:mRNA binding"/>
    <property type="evidence" value="ECO:0007669"/>
    <property type="project" value="UniProtKB-UniRule"/>
</dbReference>
<dbReference type="GO" id="GO:0019843">
    <property type="term" value="F:rRNA binding"/>
    <property type="evidence" value="ECO:0007669"/>
    <property type="project" value="UniProtKB-UniRule"/>
</dbReference>
<dbReference type="GO" id="GO:0003735">
    <property type="term" value="F:structural constituent of ribosome"/>
    <property type="evidence" value="ECO:0007669"/>
    <property type="project" value="InterPro"/>
</dbReference>
<dbReference type="GO" id="GO:0006412">
    <property type="term" value="P:translation"/>
    <property type="evidence" value="ECO:0007669"/>
    <property type="project" value="UniProtKB-UniRule"/>
</dbReference>
<dbReference type="CDD" id="cd02412">
    <property type="entry name" value="KH-II_30S_S3"/>
    <property type="match status" value="1"/>
</dbReference>
<dbReference type="FunFam" id="3.30.1140.32:FF:000001">
    <property type="entry name" value="30S ribosomal protein S3"/>
    <property type="match status" value="1"/>
</dbReference>
<dbReference type="FunFam" id="3.30.300.20:FF:000001">
    <property type="entry name" value="30S ribosomal protein S3"/>
    <property type="match status" value="1"/>
</dbReference>
<dbReference type="Gene3D" id="3.30.300.20">
    <property type="match status" value="1"/>
</dbReference>
<dbReference type="Gene3D" id="3.30.1140.32">
    <property type="entry name" value="Ribosomal protein S3, C-terminal domain"/>
    <property type="match status" value="1"/>
</dbReference>
<dbReference type="HAMAP" id="MF_01309_B">
    <property type="entry name" value="Ribosomal_uS3_B"/>
    <property type="match status" value="1"/>
</dbReference>
<dbReference type="InterPro" id="IPR004087">
    <property type="entry name" value="KH_dom"/>
</dbReference>
<dbReference type="InterPro" id="IPR015946">
    <property type="entry name" value="KH_dom-like_a/b"/>
</dbReference>
<dbReference type="InterPro" id="IPR004044">
    <property type="entry name" value="KH_dom_type_2"/>
</dbReference>
<dbReference type="InterPro" id="IPR009019">
    <property type="entry name" value="KH_sf_prok-type"/>
</dbReference>
<dbReference type="InterPro" id="IPR036419">
    <property type="entry name" value="Ribosomal_S3_C_sf"/>
</dbReference>
<dbReference type="InterPro" id="IPR005704">
    <property type="entry name" value="Ribosomal_uS3_bac-typ"/>
</dbReference>
<dbReference type="InterPro" id="IPR001351">
    <property type="entry name" value="Ribosomal_uS3_C"/>
</dbReference>
<dbReference type="InterPro" id="IPR018280">
    <property type="entry name" value="Ribosomal_uS3_CS"/>
</dbReference>
<dbReference type="NCBIfam" id="TIGR01009">
    <property type="entry name" value="rpsC_bact"/>
    <property type="match status" value="1"/>
</dbReference>
<dbReference type="PANTHER" id="PTHR11760">
    <property type="entry name" value="30S/40S RIBOSOMAL PROTEIN S3"/>
    <property type="match status" value="1"/>
</dbReference>
<dbReference type="PANTHER" id="PTHR11760:SF19">
    <property type="entry name" value="SMALL RIBOSOMAL SUBUNIT PROTEIN US3C"/>
    <property type="match status" value="1"/>
</dbReference>
<dbReference type="Pfam" id="PF07650">
    <property type="entry name" value="KH_2"/>
    <property type="match status" value="1"/>
</dbReference>
<dbReference type="Pfam" id="PF00189">
    <property type="entry name" value="Ribosomal_S3_C"/>
    <property type="match status" value="1"/>
</dbReference>
<dbReference type="SMART" id="SM00322">
    <property type="entry name" value="KH"/>
    <property type="match status" value="1"/>
</dbReference>
<dbReference type="SUPFAM" id="SSF54814">
    <property type="entry name" value="Prokaryotic type KH domain (KH-domain type II)"/>
    <property type="match status" value="1"/>
</dbReference>
<dbReference type="SUPFAM" id="SSF54821">
    <property type="entry name" value="Ribosomal protein S3 C-terminal domain"/>
    <property type="match status" value="1"/>
</dbReference>
<dbReference type="PROSITE" id="PS50823">
    <property type="entry name" value="KH_TYPE_2"/>
    <property type="match status" value="1"/>
</dbReference>
<dbReference type="PROSITE" id="PS00548">
    <property type="entry name" value="RIBOSOMAL_S3"/>
    <property type="match status" value="1"/>
</dbReference>
<keyword id="KW-0687">Ribonucleoprotein</keyword>
<keyword id="KW-0689">Ribosomal protein</keyword>
<keyword id="KW-0694">RNA-binding</keyword>
<keyword id="KW-0699">rRNA-binding</keyword>
<comment type="function">
    <text evidence="1">Binds the lower part of the 30S subunit head. Binds mRNA in the 70S ribosome, positioning it for translation.</text>
</comment>
<comment type="subunit">
    <text evidence="1">Part of the 30S ribosomal subunit. Forms a tight complex with proteins S10 and S14.</text>
</comment>
<comment type="similarity">
    <text evidence="1">Belongs to the universal ribosomal protein uS3 family.</text>
</comment>
<organism>
    <name type="scientific">Shewanella baltica (strain OS223)</name>
    <dbReference type="NCBI Taxonomy" id="407976"/>
    <lineage>
        <taxon>Bacteria</taxon>
        <taxon>Pseudomonadati</taxon>
        <taxon>Pseudomonadota</taxon>
        <taxon>Gammaproteobacteria</taxon>
        <taxon>Alteromonadales</taxon>
        <taxon>Shewanellaceae</taxon>
        <taxon>Shewanella</taxon>
    </lineage>
</organism>